<dbReference type="EC" id="1.2.1.22"/>
<dbReference type="EMBL" id="CP000742">
    <property type="protein sequence ID" value="ABR54702.1"/>
    <property type="molecule type" value="Genomic_DNA"/>
</dbReference>
<dbReference type="RefSeq" id="WP_011972604.1">
    <property type="nucleotide sequence ID" value="NC_009634.1"/>
</dbReference>
<dbReference type="SMR" id="A6UQD0"/>
<dbReference type="STRING" id="406327.Mevan_0796"/>
<dbReference type="GeneID" id="5324651"/>
<dbReference type="KEGG" id="mvn:Mevan_0796"/>
<dbReference type="eggNOG" id="arCOG01252">
    <property type="taxonomic scope" value="Archaea"/>
</dbReference>
<dbReference type="HOGENOM" id="CLU_005391_1_0_2"/>
<dbReference type="OrthoDB" id="6342at2157"/>
<dbReference type="UniPathway" id="UPA00071"/>
<dbReference type="Proteomes" id="UP000001107">
    <property type="component" value="Chromosome"/>
</dbReference>
<dbReference type="GO" id="GO:0008911">
    <property type="term" value="F:lactaldehyde dehydrogenase (NAD+) activity"/>
    <property type="evidence" value="ECO:0007669"/>
    <property type="project" value="UniProtKB-EC"/>
</dbReference>
<dbReference type="Gene3D" id="3.40.605.10">
    <property type="entry name" value="Aldehyde Dehydrogenase, Chain A, domain 1"/>
    <property type="match status" value="1"/>
</dbReference>
<dbReference type="Gene3D" id="3.40.309.10">
    <property type="entry name" value="Aldehyde Dehydrogenase, Chain A, domain 2"/>
    <property type="match status" value="1"/>
</dbReference>
<dbReference type="InterPro" id="IPR016161">
    <property type="entry name" value="Ald_DH/histidinol_DH"/>
</dbReference>
<dbReference type="InterPro" id="IPR016163">
    <property type="entry name" value="Ald_DH_C"/>
</dbReference>
<dbReference type="InterPro" id="IPR029510">
    <property type="entry name" value="Ald_DH_CS_GLU"/>
</dbReference>
<dbReference type="InterPro" id="IPR016162">
    <property type="entry name" value="Ald_DH_N"/>
</dbReference>
<dbReference type="InterPro" id="IPR015590">
    <property type="entry name" value="Aldehyde_DH_dom"/>
</dbReference>
<dbReference type="InterPro" id="IPR051020">
    <property type="entry name" value="ALDH-related_metabolic_enz"/>
</dbReference>
<dbReference type="InterPro" id="IPR053404">
    <property type="entry name" value="Lactaldehyde_DH"/>
</dbReference>
<dbReference type="NCBIfam" id="NF040648">
    <property type="entry name" value="lactal_redase_Meth"/>
    <property type="match status" value="1"/>
</dbReference>
<dbReference type="PANTHER" id="PTHR42991">
    <property type="entry name" value="ALDEHYDE DEHYDROGENASE"/>
    <property type="match status" value="1"/>
</dbReference>
<dbReference type="PANTHER" id="PTHR42991:SF1">
    <property type="entry name" value="ALDEHYDE DEHYDROGENASE"/>
    <property type="match status" value="1"/>
</dbReference>
<dbReference type="Pfam" id="PF00171">
    <property type="entry name" value="Aldedh"/>
    <property type="match status" value="1"/>
</dbReference>
<dbReference type="SUPFAM" id="SSF53720">
    <property type="entry name" value="ALDH-like"/>
    <property type="match status" value="1"/>
</dbReference>
<dbReference type="PROSITE" id="PS00687">
    <property type="entry name" value="ALDEHYDE_DEHYDR_GLU"/>
    <property type="match status" value="1"/>
</dbReference>
<feature type="chain" id="PRO_0000342593" description="Lactaldehyde dehydrogenase">
    <location>
        <begin position="1"/>
        <end position="465"/>
    </location>
</feature>
<feature type="active site" evidence="2">
    <location>
        <position position="240"/>
    </location>
</feature>
<feature type="active site" evidence="2">
    <location>
        <position position="274"/>
    </location>
</feature>
<feature type="binding site" evidence="1">
    <location>
        <begin position="220"/>
        <end position="225"/>
    </location>
    <ligand>
        <name>NAD(+)</name>
        <dbReference type="ChEBI" id="CHEBI:57540"/>
    </ligand>
</feature>
<gene>
    <name type="ordered locus">Mevan_0796</name>
</gene>
<comment type="function">
    <text evidence="1">Involved in F420 biosynthesis through the oxidation of lactaldehyde to lactate.</text>
</comment>
<comment type="catalytic activity">
    <reaction>
        <text>(S)-lactaldehyde + NAD(+) + H2O = (S)-lactate + NADH + 2 H(+)</text>
        <dbReference type="Rhea" id="RHEA:14277"/>
        <dbReference type="ChEBI" id="CHEBI:15377"/>
        <dbReference type="ChEBI" id="CHEBI:15378"/>
        <dbReference type="ChEBI" id="CHEBI:16651"/>
        <dbReference type="ChEBI" id="CHEBI:18041"/>
        <dbReference type="ChEBI" id="CHEBI:57540"/>
        <dbReference type="ChEBI" id="CHEBI:57945"/>
        <dbReference type="EC" id="1.2.1.22"/>
    </reaction>
</comment>
<comment type="pathway">
    <text>Cofactor biosynthesis; coenzyme F420 biosynthesis.</text>
</comment>
<comment type="subunit">
    <text evidence="1">Homotetramer.</text>
</comment>
<comment type="similarity">
    <text evidence="3">Belongs to the aldehyde dehydrogenase family.</text>
</comment>
<name>LADH_METVS</name>
<accession>A6UQD0</accession>
<keyword id="KW-0520">NAD</keyword>
<keyword id="KW-0560">Oxidoreductase</keyword>
<organism>
    <name type="scientific">Methanococcus vannielii (strain ATCC 35089 / DSM 1224 / JCM 13029 / OCM 148 / SB)</name>
    <dbReference type="NCBI Taxonomy" id="406327"/>
    <lineage>
        <taxon>Archaea</taxon>
        <taxon>Methanobacteriati</taxon>
        <taxon>Methanobacteriota</taxon>
        <taxon>Methanomada group</taxon>
        <taxon>Methanococci</taxon>
        <taxon>Methanococcales</taxon>
        <taxon>Methanococcaceae</taxon>
        <taxon>Methanococcus</taxon>
    </lineage>
</organism>
<reference key="1">
    <citation type="submission" date="2007-06" db="EMBL/GenBank/DDBJ databases">
        <title>Complete sequence of Methanococcus vannielii SB.</title>
        <authorList>
            <consortium name="US DOE Joint Genome Institute"/>
            <person name="Copeland A."/>
            <person name="Lucas S."/>
            <person name="Lapidus A."/>
            <person name="Barry K."/>
            <person name="Glavina del Rio T."/>
            <person name="Dalin E."/>
            <person name="Tice H."/>
            <person name="Pitluck S."/>
            <person name="Chain P."/>
            <person name="Malfatti S."/>
            <person name="Shin M."/>
            <person name="Vergez L."/>
            <person name="Schmutz J."/>
            <person name="Larimer F."/>
            <person name="Land M."/>
            <person name="Hauser L."/>
            <person name="Kyrpides N."/>
            <person name="Anderson I."/>
            <person name="Sieprawska-Lupa M."/>
            <person name="Whitman W.B."/>
            <person name="Richardson P."/>
        </authorList>
    </citation>
    <scope>NUCLEOTIDE SEQUENCE [LARGE SCALE GENOMIC DNA]</scope>
    <source>
        <strain>ATCC 35089 / DSM 1224 / JCM 13029 / OCM 148 / SB</strain>
    </source>
</reference>
<sequence>MFIDGKWILREDLDILNPYTLEIIERITALDREETKYAIEVATENKDVMKELNPSKRYSLLMKIAEHISSKKDLFANTISVDVGKPIKQSRIEVDRTITAFRLSALYAKELRGETIPSENEIIFTKKEPVGVVGAITPFNFPLNLITHKIGPAIATGNAVVLHPSSKAPITAIYLTKVIEHVLKKMNIERGVFNLTTGNGEIVGDEIAKNEKINFLSFTGSVEVGELISKSSYMKKVALELGGNNPLIVLKDSDIELAAKSAVKSKFLNSGQVCISVGKVIVEEEVLETFTKKVIEETKKLVLGNPLDEKTDLGPLITPESALRVEILIKESISEGGELLIGGNRSNSLISPAVLNIDEDNILSKVEAFGPILPILKAKDDEHALNIANNSKYGLQAGIFTNDINKAMKFANKLEYGGVIVNGSPTFRKDNMPFGGIKKSGLGKEGIKYAVEEMCETKTVVIHNM</sequence>
<proteinExistence type="inferred from homology"/>
<evidence type="ECO:0000250" key="1"/>
<evidence type="ECO:0000255" key="2">
    <source>
        <dbReference type="PROSITE-ProRule" id="PRU10007"/>
    </source>
</evidence>
<evidence type="ECO:0000305" key="3"/>
<protein>
    <recommendedName>
        <fullName>Lactaldehyde dehydrogenase</fullName>
        <ecNumber>1.2.1.22</ecNumber>
    </recommendedName>
</protein>